<keyword id="KW-0025">Alternative splicing</keyword>
<keyword id="KW-0489">Methyltransferase</keyword>
<keyword id="KW-0496">Mitochondrion</keyword>
<keyword id="KW-1267">Proteomics identification</keyword>
<keyword id="KW-1185">Reference proteome</keyword>
<keyword id="KW-0698">rRNA processing</keyword>
<keyword id="KW-0949">S-adenosyl-L-methionine</keyword>
<keyword id="KW-0808">Transferase</keyword>
<keyword id="KW-0809">Transit peptide</keyword>
<feature type="transit peptide" description="Mitochondrion" evidence="1">
    <location>
        <begin position="1"/>
        <end position="20"/>
    </location>
</feature>
<feature type="chain" id="PRO_0000273202" description="rRNA methyltransferase 1, mitochondrial">
    <location>
        <begin position="21"/>
        <end position="353"/>
    </location>
</feature>
<feature type="region of interest" description="Disordered" evidence="2">
    <location>
        <begin position="311"/>
        <end position="353"/>
    </location>
</feature>
<feature type="splice variant" id="VSP_022494" description="In isoform 2." evidence="8 9 12">
    <location>
        <begin position="1"/>
        <end position="198"/>
    </location>
</feature>
<feature type="sequence variant" id="VAR_061906" description="In dbSNP:rs60978234.">
    <original>P</original>
    <variation>S</variation>
    <location>
        <position position="98"/>
    </location>
</feature>
<organism>
    <name type="scientific">Homo sapiens</name>
    <name type="common">Human</name>
    <dbReference type="NCBI Taxonomy" id="9606"/>
    <lineage>
        <taxon>Eukaryota</taxon>
        <taxon>Metazoa</taxon>
        <taxon>Chordata</taxon>
        <taxon>Craniata</taxon>
        <taxon>Vertebrata</taxon>
        <taxon>Euteleostomi</taxon>
        <taxon>Mammalia</taxon>
        <taxon>Eutheria</taxon>
        <taxon>Euarchontoglires</taxon>
        <taxon>Primates</taxon>
        <taxon>Haplorrhini</taxon>
        <taxon>Catarrhini</taxon>
        <taxon>Hominidae</taxon>
        <taxon>Homo</taxon>
    </lineage>
</organism>
<sequence>MALLSTVRGATWGRLVTRHFSHAARHGERPGGEELSRLLLDDLVPTSRLELLFGMTPCLLALQAARRSVARLLLQAGKAGLQGKRAELLRMAEARDIPVLRPRRQKLDTMCRYQVHQGVCMEVSPLRPRPWREAGEASPGDDPQQLWLVLDGIQDPRNFGAVLRSAHFLGVDKVITSRRNSCPLTPVVSKSSAGAMEVMDVFSTDDLTGFLQTKAQQGWLVAGTVGCPSTEDPQSSEIPIMSCLEFLWERPTLLVLGNEGSGLSQEVQASCQLLLTILPRRQLPPGLESLNVSVAAGILLHSICSQRKGFPTEGERRQLLQDPQEPSARSEGLSMAQHPGLSSGPEKERQNEG</sequence>
<dbReference type="EC" id="2.1.1.-" evidence="14 15"/>
<dbReference type="EMBL" id="AK026231">
    <property type="protein sequence ID" value="BAB15401.1"/>
    <property type="molecule type" value="mRNA"/>
</dbReference>
<dbReference type="EMBL" id="AK292307">
    <property type="protein sequence ID" value="BAF84996.1"/>
    <property type="molecule type" value="mRNA"/>
</dbReference>
<dbReference type="EMBL" id="CR457357">
    <property type="protein sequence ID" value="CAG33638.1"/>
    <property type="molecule type" value="mRNA"/>
</dbReference>
<dbReference type="EMBL" id="CH471199">
    <property type="protein sequence ID" value="EAW57571.1"/>
    <property type="molecule type" value="Genomic_DNA"/>
</dbReference>
<dbReference type="EMBL" id="BC009416">
    <property type="protein sequence ID" value="AAH09416.2"/>
    <property type="molecule type" value="mRNA"/>
</dbReference>
<dbReference type="EMBL" id="BC072411">
    <property type="protein sequence ID" value="AAH72411.1"/>
    <property type="molecule type" value="mRNA"/>
</dbReference>
<dbReference type="CCDS" id="CCDS32631.1">
    <molecule id="Q6IN84-1"/>
</dbReference>
<dbReference type="RefSeq" id="NP_079140.2">
    <molecule id="Q6IN84-1"/>
    <property type="nucleotide sequence ID" value="NM_024864.4"/>
</dbReference>
<dbReference type="SMR" id="Q6IN84"/>
<dbReference type="BioGRID" id="122999">
    <property type="interactions" value="379"/>
</dbReference>
<dbReference type="FunCoup" id="Q6IN84">
    <property type="interactions" value="524"/>
</dbReference>
<dbReference type="IntAct" id="Q6IN84">
    <property type="interactions" value="124"/>
</dbReference>
<dbReference type="MINT" id="Q6IN84"/>
<dbReference type="STRING" id="9606.ENSP00000481559"/>
<dbReference type="GlyGen" id="Q6IN84">
    <property type="glycosylation" value="1 site, 1 O-linked glycan (1 site)"/>
</dbReference>
<dbReference type="iPTMnet" id="Q6IN84"/>
<dbReference type="PhosphoSitePlus" id="Q6IN84"/>
<dbReference type="SwissPalm" id="Q6IN84"/>
<dbReference type="BioMuta" id="MRM1"/>
<dbReference type="DMDM" id="74736506"/>
<dbReference type="jPOST" id="Q6IN84"/>
<dbReference type="MassIVE" id="Q6IN84"/>
<dbReference type="PaxDb" id="9606-ENSP00000481559"/>
<dbReference type="PeptideAtlas" id="Q6IN84"/>
<dbReference type="ProteomicsDB" id="66442">
    <molecule id="Q6IN84-1"/>
</dbReference>
<dbReference type="ProteomicsDB" id="66443">
    <molecule id="Q6IN84-2"/>
</dbReference>
<dbReference type="Pumba" id="Q6IN84"/>
<dbReference type="Antibodypedia" id="72774">
    <property type="antibodies" value="121 antibodies from 21 providers"/>
</dbReference>
<dbReference type="DNASU" id="79922"/>
<dbReference type="Ensembl" id="ENST00000611231.2">
    <molecule id="Q6IN84-1"/>
    <property type="protein sequence ID" value="ENSP00000478520.1"/>
    <property type="gene ID" value="ENSG00000274853.2"/>
</dbReference>
<dbReference type="Ensembl" id="ENST00000614766.5">
    <molecule id="Q6IN84-1"/>
    <property type="protein sequence ID" value="ENSP00000481559.1"/>
    <property type="gene ID" value="ENSG00000278619.5"/>
</dbReference>
<dbReference type="GeneID" id="79922"/>
<dbReference type="KEGG" id="hsa:79922"/>
<dbReference type="MANE-Select" id="ENST00000614766.5">
    <property type="protein sequence ID" value="ENSP00000481559.1"/>
    <property type="RefSeq nucleotide sequence ID" value="NM_024864.5"/>
    <property type="RefSeq protein sequence ID" value="NP_079140.2"/>
</dbReference>
<dbReference type="UCSC" id="uc002hne.4">
    <molecule id="Q6IN84-1"/>
    <property type="organism name" value="human"/>
</dbReference>
<dbReference type="AGR" id="HGNC:26202"/>
<dbReference type="CTD" id="79922"/>
<dbReference type="DisGeNET" id="79922"/>
<dbReference type="GeneCards" id="MRM1"/>
<dbReference type="HGNC" id="HGNC:26202">
    <property type="gene designation" value="MRM1"/>
</dbReference>
<dbReference type="HPA" id="ENSG00000278619">
    <property type="expression patterns" value="Low tissue specificity"/>
</dbReference>
<dbReference type="neXtProt" id="NX_Q6IN84"/>
<dbReference type="OpenTargets" id="ENSG00000278619"/>
<dbReference type="PharmGKB" id="PA142671338"/>
<dbReference type="VEuPathDB" id="HostDB:ENSG00000278619"/>
<dbReference type="eggNOG" id="KOG0838">
    <property type="taxonomic scope" value="Eukaryota"/>
</dbReference>
<dbReference type="GeneTree" id="ENSGT00390000018761"/>
<dbReference type="HOGENOM" id="CLU_021322_5_1_1"/>
<dbReference type="InParanoid" id="Q6IN84"/>
<dbReference type="OMA" id="QVPPYEY"/>
<dbReference type="OrthoDB" id="270651at2759"/>
<dbReference type="PAN-GO" id="Q6IN84">
    <property type="GO annotations" value="3 GO annotations based on evolutionary models"/>
</dbReference>
<dbReference type="PhylomeDB" id="Q6IN84"/>
<dbReference type="TreeFam" id="TF315167"/>
<dbReference type="BRENDA" id="2.1.1.B125">
    <property type="organism ID" value="2681"/>
</dbReference>
<dbReference type="PathwayCommons" id="Q6IN84"/>
<dbReference type="Reactome" id="R-HSA-6793080">
    <property type="pathway name" value="rRNA modification in the mitochondrion"/>
</dbReference>
<dbReference type="SignaLink" id="Q6IN84"/>
<dbReference type="BioGRID-ORCS" id="79922">
    <property type="hits" value="20 hits in 1148 CRISPR screens"/>
</dbReference>
<dbReference type="CD-CODE" id="5965E019">
    <property type="entry name" value="mtRNA granule"/>
</dbReference>
<dbReference type="GenomeRNAi" id="79922"/>
<dbReference type="Pharos" id="Q6IN84">
    <property type="development level" value="Tbio"/>
</dbReference>
<dbReference type="PRO" id="PR:Q6IN84"/>
<dbReference type="Proteomes" id="UP000005640">
    <property type="component" value="Chromosome 17"/>
</dbReference>
<dbReference type="RNAct" id="Q6IN84">
    <property type="molecule type" value="protein"/>
</dbReference>
<dbReference type="Bgee" id="ENSG00000278619">
    <property type="expression patterns" value="Expressed in primordial germ cell in gonad and 93 other cell types or tissues"/>
</dbReference>
<dbReference type="ExpressionAtlas" id="Q6IN84">
    <property type="expression patterns" value="baseline and differential"/>
</dbReference>
<dbReference type="GO" id="GO:0005759">
    <property type="term" value="C:mitochondrial matrix"/>
    <property type="evidence" value="ECO:0000314"/>
    <property type="project" value="UniProtKB"/>
</dbReference>
<dbReference type="GO" id="GO:0005739">
    <property type="term" value="C:mitochondrion"/>
    <property type="evidence" value="ECO:0000314"/>
    <property type="project" value="HPA"/>
</dbReference>
<dbReference type="GO" id="GO:0003723">
    <property type="term" value="F:RNA binding"/>
    <property type="evidence" value="ECO:0007005"/>
    <property type="project" value="UniProtKB"/>
</dbReference>
<dbReference type="GO" id="GO:0016435">
    <property type="term" value="F:rRNA (guanine) methyltransferase activity"/>
    <property type="evidence" value="ECO:0000318"/>
    <property type="project" value="GO_Central"/>
</dbReference>
<dbReference type="GO" id="GO:0070039">
    <property type="term" value="F:rRNA (guanosine-2'-O-)-methyltransferase activity"/>
    <property type="evidence" value="ECO:0000315"/>
    <property type="project" value="FlyBase"/>
</dbReference>
<dbReference type="GO" id="GO:0000451">
    <property type="term" value="P:rRNA 2'-O-methylation"/>
    <property type="evidence" value="ECO:0000304"/>
    <property type="project" value="Reactome"/>
</dbReference>
<dbReference type="GO" id="GO:0000154">
    <property type="term" value="P:rRNA modification"/>
    <property type="evidence" value="ECO:0000318"/>
    <property type="project" value="GO_Central"/>
</dbReference>
<dbReference type="GO" id="GO:0006364">
    <property type="term" value="P:rRNA processing"/>
    <property type="evidence" value="ECO:0000315"/>
    <property type="project" value="FlyBase"/>
</dbReference>
<dbReference type="CDD" id="cd18105">
    <property type="entry name" value="SpoU-like_MRM1"/>
    <property type="match status" value="1"/>
</dbReference>
<dbReference type="FunFam" id="3.40.1280.10:FF:000025">
    <property type="entry name" value="Mitochondrial rRNA methyltransferase 1"/>
    <property type="match status" value="1"/>
</dbReference>
<dbReference type="FunFam" id="3.30.1330.30:FF:000021">
    <property type="entry name" value="rRNA methyltransferase 1, mitochondrial"/>
    <property type="match status" value="1"/>
</dbReference>
<dbReference type="Gene3D" id="3.30.1330.30">
    <property type="match status" value="1"/>
</dbReference>
<dbReference type="Gene3D" id="3.40.1280.10">
    <property type="match status" value="1"/>
</dbReference>
<dbReference type="InterPro" id="IPR029028">
    <property type="entry name" value="Alpha/beta_knot_MTases"/>
</dbReference>
<dbReference type="InterPro" id="IPR047182">
    <property type="entry name" value="MRM1"/>
</dbReference>
<dbReference type="InterPro" id="IPR047261">
    <property type="entry name" value="MRM1_MeTrfase_dom"/>
</dbReference>
<dbReference type="InterPro" id="IPR029064">
    <property type="entry name" value="Ribosomal_eL30-like_sf"/>
</dbReference>
<dbReference type="InterPro" id="IPR004441">
    <property type="entry name" value="rRNA_MeTrfase_TrmH"/>
</dbReference>
<dbReference type="InterPro" id="IPR001537">
    <property type="entry name" value="SpoU_MeTrfase"/>
</dbReference>
<dbReference type="InterPro" id="IPR013123">
    <property type="entry name" value="SpoU_subst-bd"/>
</dbReference>
<dbReference type="InterPro" id="IPR029026">
    <property type="entry name" value="tRNA_m1G_MTases_N"/>
</dbReference>
<dbReference type="NCBIfam" id="TIGR00186">
    <property type="entry name" value="rRNA_methyl_3"/>
    <property type="match status" value="1"/>
</dbReference>
<dbReference type="PANTHER" id="PTHR46103">
    <property type="entry name" value="RRNA METHYLTRANSFERASE 1, MITOCHONDRIAL"/>
    <property type="match status" value="1"/>
</dbReference>
<dbReference type="PANTHER" id="PTHR46103:SF1">
    <property type="entry name" value="RRNA METHYLTRANSFERASE 1, MITOCHONDRIAL"/>
    <property type="match status" value="1"/>
</dbReference>
<dbReference type="Pfam" id="PF00588">
    <property type="entry name" value="SpoU_methylase"/>
    <property type="match status" value="1"/>
</dbReference>
<dbReference type="Pfam" id="PF08032">
    <property type="entry name" value="SpoU_sub_bind"/>
    <property type="match status" value="1"/>
</dbReference>
<dbReference type="SMART" id="SM00967">
    <property type="entry name" value="SpoU_sub_bind"/>
    <property type="match status" value="1"/>
</dbReference>
<dbReference type="SUPFAM" id="SSF75217">
    <property type="entry name" value="alpha/beta knot"/>
    <property type="match status" value="1"/>
</dbReference>
<dbReference type="SUPFAM" id="SSF55315">
    <property type="entry name" value="L30e-like"/>
    <property type="match status" value="1"/>
</dbReference>
<comment type="function">
    <text evidence="5 7">S-adenosyl-L-methionine-dependent 2'-O-ribose methyltransferase that catalyzes the formation of 2'-O-methylguanosine at position 1145 (Gm1145) in the 16S mitochondrial large subunit ribosomal RNA (mtLSU rRNA), a universally conserved modification in the peptidyl transferase domain of the mtLSU rRNA.</text>
</comment>
<comment type="catalytic activity">
    <reaction evidence="14 15">
        <text>guanosine(1145) in 16S rRNA + S-adenosyl-L-methionine = 2'-O-methylguanosine(1145) in 16S rRNA + S-adenosyl-L-homocysteine + H(+)</text>
        <dbReference type="Rhea" id="RHEA:47776"/>
        <dbReference type="Rhea" id="RHEA-COMP:11909"/>
        <dbReference type="Rhea" id="RHEA-COMP:11910"/>
        <dbReference type="ChEBI" id="CHEBI:15378"/>
        <dbReference type="ChEBI" id="CHEBI:57856"/>
        <dbReference type="ChEBI" id="CHEBI:59789"/>
        <dbReference type="ChEBI" id="CHEBI:74269"/>
        <dbReference type="ChEBI" id="CHEBI:74445"/>
    </reaction>
</comment>
<comment type="interaction">
    <interactant intactId="EBI-5454865">
        <id>Q6IN84</id>
    </interactant>
    <interactant intactId="EBI-10827839">
        <id>Q15848</id>
        <label>ADIPOQ</label>
    </interactant>
    <organismsDiffer>false</organismsDiffer>
    <experiments>3</experiments>
</comment>
<comment type="interaction">
    <interactant intactId="EBI-5454865">
        <id>Q6IN84</id>
    </interactant>
    <interactant intactId="EBI-741181">
        <id>Q6RW13</id>
        <label>AGTRAP</label>
    </interactant>
    <organismsDiffer>false</organismsDiffer>
    <experiments>3</experiments>
</comment>
<comment type="interaction">
    <interactant intactId="EBI-5454865">
        <id>Q6IN84</id>
    </interactant>
    <interactant intactId="EBI-11522760">
        <id>Q6RW13-2</id>
        <label>AGTRAP</label>
    </interactant>
    <organismsDiffer>false</organismsDiffer>
    <experiments>3</experiments>
</comment>
<comment type="interaction">
    <interactant intactId="EBI-5454865">
        <id>Q6IN84</id>
    </interactant>
    <interactant intactId="EBI-745213">
        <id>P29972</id>
        <label>AQP1</label>
    </interactant>
    <organismsDiffer>false</organismsDiffer>
    <experiments>3</experiments>
</comment>
<comment type="interaction">
    <interactant intactId="EBI-5454865">
        <id>Q6IN84</id>
    </interactant>
    <interactant intactId="EBI-12701138">
        <id>P41181</id>
        <label>AQP2</label>
    </interactant>
    <organismsDiffer>false</organismsDiffer>
    <experiments>3</experiments>
</comment>
<comment type="interaction">
    <interactant intactId="EBI-5454865">
        <id>Q6IN84</id>
    </interactant>
    <interactant intactId="EBI-2808854">
        <id>Q92482</id>
        <label>AQP3</label>
    </interactant>
    <organismsDiffer>false</organismsDiffer>
    <experiments>3</experiments>
</comment>
<comment type="interaction">
    <interactant intactId="EBI-5454865">
        <id>Q6IN84</id>
    </interactant>
    <interactant intactId="EBI-12244618">
        <id>Q6PL45-2</id>
        <label>BRICD5</label>
    </interactant>
    <organismsDiffer>false</organismsDiffer>
    <experiments>3</experiments>
</comment>
<comment type="interaction">
    <interactant intactId="EBI-5454865">
        <id>Q6IN84</id>
    </interactant>
    <interactant intactId="EBI-2873970">
        <id>P13236</id>
        <label>CCL4</label>
    </interactant>
    <organismsDiffer>false</organismsDiffer>
    <experiments>3</experiments>
</comment>
<comment type="interaction">
    <interactant intactId="EBI-5454865">
        <id>Q6IN84</id>
    </interactant>
    <interactant intactId="EBI-10271156">
        <id>Q8NHW4</id>
        <label>CCL4L2</label>
    </interactant>
    <organismsDiffer>false</organismsDiffer>
    <experiments>3</experiments>
</comment>
<comment type="interaction">
    <interactant intactId="EBI-5454865">
        <id>Q6IN84</id>
    </interactant>
    <interactant intactId="EBI-723153">
        <id>Q9UFW8</id>
        <label>CGGBP1</label>
    </interactant>
    <organismsDiffer>false</organismsDiffer>
    <experiments>7</experiments>
</comment>
<comment type="interaction">
    <interactant intactId="EBI-5454865">
        <id>Q6IN84</id>
    </interactant>
    <interactant intactId="EBI-7247651">
        <id>Q96MX0</id>
        <label>CMTM3</label>
    </interactant>
    <organismsDiffer>false</organismsDiffer>
    <experiments>3</experiments>
</comment>
<comment type="interaction">
    <interactant intactId="EBI-5454865">
        <id>Q6IN84</id>
    </interactant>
    <interactant intactId="EBI-11522780">
        <id>Q96DZ9-2</id>
        <label>CMTM5</label>
    </interactant>
    <organismsDiffer>false</organismsDiffer>
    <experiments>3</experiments>
</comment>
<comment type="interaction">
    <interactant intactId="EBI-5454865">
        <id>Q6IN84</id>
    </interactant>
    <interactant intactId="EBI-12172273">
        <id>O95406</id>
        <label>CNIH1</label>
    </interactant>
    <organismsDiffer>false</organismsDiffer>
    <experiments>3</experiments>
</comment>
<comment type="interaction">
    <interactant intactId="EBI-5454865">
        <id>Q6IN84</id>
    </interactant>
    <interactant intactId="EBI-745535">
        <id>Q8NI60</id>
        <label>COQ8A</label>
    </interactant>
    <organismsDiffer>false</organismsDiffer>
    <experiments>3</experiments>
</comment>
<comment type="interaction">
    <interactant intactId="EBI-5454865">
        <id>Q6IN84</id>
    </interactant>
    <interactant intactId="EBI-8639143">
        <id>Q96LL9</id>
        <label>DNAJC30</label>
    </interactant>
    <organismsDiffer>false</organismsDiffer>
    <experiments>3</experiments>
</comment>
<comment type="interaction">
    <interactant intactId="EBI-5454865">
        <id>Q6IN84</id>
    </interactant>
    <interactant intactId="EBI-711490">
        <id>Q9UKR5</id>
        <label>ERG28</label>
    </interactant>
    <organismsDiffer>false</organismsDiffer>
    <experiments>3</experiments>
</comment>
<comment type="interaction">
    <interactant intactId="EBI-5454865">
        <id>Q6IN84</id>
    </interactant>
    <interactant intactId="EBI-12001340">
        <id>P62508-3</id>
        <label>ESRRG</label>
    </interactant>
    <organismsDiffer>false</organismsDiffer>
    <experiments>5</experiments>
</comment>
<comment type="interaction">
    <interactant intactId="EBI-5454865">
        <id>Q6IN84</id>
    </interactant>
    <interactant intactId="EBI-3918971">
        <id>Q9Y680</id>
        <label>FKBP7</label>
    </interactant>
    <organismsDiffer>false</organismsDiffer>
    <experiments>3</experiments>
</comment>
<comment type="interaction">
    <interactant intactId="EBI-5454865">
        <id>Q6IN84</id>
    </interactant>
    <interactant intactId="EBI-2568251">
        <id>P11215</id>
        <label>ITGAM</label>
    </interactant>
    <organismsDiffer>false</organismsDiffer>
    <experiments>3</experiments>
</comment>
<comment type="interaction">
    <interactant intactId="EBI-5454865">
        <id>Q6IN84</id>
    </interactant>
    <interactant intactId="EBI-750770">
        <id>Q96E93</id>
        <label>KLRG1</label>
    </interactant>
    <organismsDiffer>false</organismsDiffer>
    <experiments>3</experiments>
</comment>
<comment type="interaction">
    <interactant intactId="EBI-5454865">
        <id>Q6IN84</id>
    </interactant>
    <interactant intactId="EBI-12033434">
        <id>Q9UBY5</id>
        <label>LPAR3</label>
    </interactant>
    <organismsDiffer>false</organismsDiffer>
    <experiments>3</experiments>
</comment>
<comment type="interaction">
    <interactant intactId="EBI-5454865">
        <id>Q6IN84</id>
    </interactant>
    <interactant intactId="EBI-944295">
        <id>Q969L2</id>
        <label>MAL2</label>
    </interactant>
    <organismsDiffer>false</organismsDiffer>
    <experiments>3</experiments>
</comment>
<comment type="interaction">
    <interactant intactId="EBI-5454865">
        <id>Q6IN84</id>
    </interactant>
    <interactant intactId="EBI-6165891">
        <id>Q14696</id>
        <label>MESD</label>
    </interactant>
    <organismsDiffer>false</organismsDiffer>
    <experiments>3</experiments>
</comment>
<comment type="interaction">
    <interactant intactId="EBI-5454865">
        <id>Q6IN84</id>
    </interactant>
    <interactant intactId="EBI-724754">
        <id>O14880</id>
        <label>MGST3</label>
    </interactant>
    <organismsDiffer>false</organismsDiffer>
    <experiments>3</experiments>
</comment>
<comment type="interaction">
    <interactant intactId="EBI-5454865">
        <id>Q6IN84</id>
    </interactant>
    <interactant intactId="EBI-10262547">
        <id>Q8IXM6</id>
        <label>NRM</label>
    </interactant>
    <organismsDiffer>false</organismsDiffer>
    <experiments>3</experiments>
</comment>
<comment type="interaction">
    <interactant intactId="EBI-5454865">
        <id>Q6IN84</id>
    </interactant>
    <interactant intactId="EBI-17973370">
        <id>Q969Y0</id>
        <label>NXPE3</label>
    </interactant>
    <organismsDiffer>false</organismsDiffer>
    <experiments>3</experiments>
</comment>
<comment type="interaction">
    <interactant intactId="EBI-5454865">
        <id>Q6IN84</id>
    </interactant>
    <interactant intactId="EBI-17589229">
        <id>Q6NTF9-3</id>
        <label>RHBDD2</label>
    </interactant>
    <organismsDiffer>false</organismsDiffer>
    <experiments>3</experiments>
</comment>
<comment type="interaction">
    <interactant intactId="EBI-5454865">
        <id>Q6IN84</id>
    </interactant>
    <interactant intactId="EBI-12423312">
        <id>Q5GAN6</id>
        <label>RNASE10</label>
    </interactant>
    <organismsDiffer>false</organismsDiffer>
    <experiments>3</experiments>
</comment>
<comment type="interaction">
    <interactant intactId="EBI-5454865">
        <id>Q6IN84</id>
    </interactant>
    <interactant intactId="EBI-9679163">
        <id>Q9Y6D0</id>
        <label>SELENOK</label>
    </interactant>
    <organismsDiffer>false</organismsDiffer>
    <experiments>3</experiments>
</comment>
<comment type="interaction">
    <interactant intactId="EBI-5454865">
        <id>Q6IN84</id>
    </interactant>
    <interactant intactId="EBI-17975052">
        <id>Q9BT56</id>
        <label>SPX</label>
    </interactant>
    <organismsDiffer>false</organismsDiffer>
    <experiments>3</experiments>
</comment>
<comment type="interaction">
    <interactant intactId="EBI-5454865">
        <id>Q6IN84</id>
    </interactant>
    <interactant intactId="EBI-738687">
        <id>P02808</id>
        <label>STATH</label>
    </interactant>
    <organismsDiffer>false</organismsDiffer>
    <experiments>3</experiments>
</comment>
<comment type="interaction">
    <interactant intactId="EBI-5454865">
        <id>Q6IN84</id>
    </interactant>
    <interactant intactId="EBI-3221827">
        <id>O15400</id>
        <label>STX7</label>
    </interactant>
    <organismsDiffer>false</organismsDiffer>
    <experiments>3</experiments>
</comment>
<comment type="interaction">
    <interactant intactId="EBI-5454865">
        <id>Q6IN84</id>
    </interactant>
    <interactant intactId="EBI-9071725">
        <id>P08247</id>
        <label>SYP</label>
    </interactant>
    <organismsDiffer>false</organismsDiffer>
    <experiments>3</experiments>
</comment>
<comment type="interaction">
    <interactant intactId="EBI-5454865">
        <id>Q6IN84</id>
    </interactant>
    <interactant intactId="EBI-17284568">
        <id>Q9BQG1</id>
        <label>SYT3</label>
    </interactant>
    <organismsDiffer>false</organismsDiffer>
    <experiments>3</experiments>
</comment>
<comment type="interaction">
    <interactant intactId="EBI-5454865">
        <id>Q6IN84</id>
    </interactant>
    <interactant intactId="EBI-723946">
        <id>P17152</id>
        <label>TMEM11</label>
    </interactant>
    <organismsDiffer>false</organismsDiffer>
    <experiments>3</experiments>
</comment>
<comment type="interaction">
    <interactant intactId="EBI-5454865">
        <id>Q6IN84</id>
    </interactant>
    <interactant intactId="EBI-12887458">
        <id>Q9BU79</id>
        <label>TMEM243</label>
    </interactant>
    <organismsDiffer>false</organismsDiffer>
    <experiments>3</experiments>
</comment>
<comment type="interaction">
    <interactant intactId="EBI-5454865">
        <id>Q6IN84</id>
    </interactant>
    <interactant intactId="EBI-12038591">
        <id>Q69YG0</id>
        <label>TMEM42</label>
    </interactant>
    <organismsDiffer>false</organismsDiffer>
    <experiments>3</experiments>
</comment>
<comment type="interaction">
    <interactant intactId="EBI-5454865">
        <id>Q6IN84</id>
    </interactant>
    <interactant intactId="EBI-12111910">
        <id>Q5BJF2</id>
        <label>TMEM97</label>
    </interactant>
    <organismsDiffer>false</organismsDiffer>
    <experiments>3</experiments>
</comment>
<comment type="interaction">
    <interactant intactId="EBI-5454865">
        <id>Q6IN84</id>
    </interactant>
    <interactant intactId="EBI-10210710">
        <id>P49638</id>
        <label>TTPA</label>
    </interactant>
    <organismsDiffer>false</organismsDiffer>
    <experiments>3</experiments>
</comment>
<comment type="interaction">
    <interactant intactId="EBI-5454865">
        <id>Q6IN84</id>
    </interactant>
    <interactant intactId="EBI-11988865">
        <id>A5PKU2</id>
        <label>TUSC5</label>
    </interactant>
    <organismsDiffer>false</organismsDiffer>
    <experiments>3</experiments>
</comment>
<comment type="interaction">
    <interactant intactId="EBI-5454865">
        <id>Q6IN84</id>
    </interactant>
    <interactant intactId="EBI-11337915">
        <id>Q8N0U8</id>
        <label>VKORC1L1</label>
    </interactant>
    <organismsDiffer>false</organismsDiffer>
    <experiments>3</experiments>
</comment>
<comment type="interaction">
    <interactant intactId="EBI-5454865">
        <id>Q6IN84</id>
    </interactant>
    <interactant intactId="EBI-12190699">
        <id>Q6UX27-3</id>
        <label>VSTM1</label>
    </interactant>
    <organismsDiffer>false</organismsDiffer>
    <experiments>3</experiments>
</comment>
<comment type="interaction">
    <interactant intactId="EBI-25835707">
        <id>Q6IN84-2</id>
    </interactant>
    <interactant intactId="EBI-718729">
        <id>P55212</id>
        <label>CASP6</label>
    </interactant>
    <organismsDiffer>false</organismsDiffer>
    <experiments>3</experiments>
</comment>
<comment type="interaction">
    <interactant intactId="EBI-25835707">
        <id>Q6IN84-2</id>
    </interactant>
    <interactant intactId="EBI-25837549">
        <id>P28329-3</id>
        <label>CHAT</label>
    </interactant>
    <organismsDiffer>false</organismsDiffer>
    <experiments>3</experiments>
</comment>
<comment type="interaction">
    <interactant intactId="EBI-25835707">
        <id>Q6IN84-2</id>
    </interactant>
    <interactant intactId="EBI-348399">
        <id>P22607</id>
        <label>FGFR3</label>
    </interactant>
    <organismsDiffer>false</organismsDiffer>
    <experiments>3</experiments>
</comment>
<comment type="interaction">
    <interactant intactId="EBI-25835707">
        <id>Q6IN84-2</id>
    </interactant>
    <interactant intactId="EBI-8285963">
        <id>Q14957</id>
        <label>GRIN2C</label>
    </interactant>
    <organismsDiffer>false</organismsDiffer>
    <experiments>3</experiments>
</comment>
<comment type="interaction">
    <interactant intactId="EBI-25835707">
        <id>Q6IN84-2</id>
    </interactant>
    <interactant intactId="EBI-351506">
        <id>P06396</id>
        <label>GSN</label>
    </interactant>
    <organismsDiffer>false</organismsDiffer>
    <experiments>3</experiments>
</comment>
<comment type="interaction">
    <interactant intactId="EBI-25835707">
        <id>Q6IN84-2</id>
    </interactant>
    <interactant intactId="EBI-712096">
        <id>P30519</id>
        <label>HMOX2</label>
    </interactant>
    <organismsDiffer>false</organismsDiffer>
    <experiments>3</experiments>
</comment>
<comment type="interaction">
    <interactant intactId="EBI-25835707">
        <id>Q6IN84-2</id>
    </interactant>
    <interactant intactId="EBI-21591415">
        <id>P13473-2</id>
        <label>LAMP2</label>
    </interactant>
    <organismsDiffer>false</organismsDiffer>
    <experiments>3</experiments>
</comment>
<comment type="interaction">
    <interactant intactId="EBI-25835707">
        <id>Q6IN84-2</id>
    </interactant>
    <interactant intactId="EBI-5280197">
        <id>O75400-2</id>
        <label>PRPF40A</label>
    </interactant>
    <organismsDiffer>false</organismsDiffer>
    <experiments>3</experiments>
</comment>
<comment type="interaction">
    <interactant intactId="EBI-25835707">
        <id>Q6IN84-2</id>
    </interactant>
    <interactant intactId="EBI-286642">
        <id>P62826</id>
        <label>RAN</label>
    </interactant>
    <organismsDiffer>false</organismsDiffer>
    <experiments>3</experiments>
</comment>
<comment type="interaction">
    <interactant intactId="EBI-25835707">
        <id>Q6IN84-2</id>
    </interactant>
    <interactant intactId="EBI-741480">
        <id>Q9UMX0</id>
        <label>UBQLN1</label>
    </interactant>
    <organismsDiffer>false</organismsDiffer>
    <experiments>3</experiments>
</comment>
<comment type="interaction">
    <interactant intactId="EBI-25835707">
        <id>Q6IN84-2</id>
    </interactant>
    <interactant intactId="EBI-25900580">
        <id>Q9Y649</id>
    </interactant>
    <organismsDiffer>false</organismsDiffer>
    <experiments>3</experiments>
</comment>
<comment type="subcellular location">
    <subcellularLocation>
        <location evidence="3 4 6">Mitochondrion matrix</location>
    </subcellularLocation>
</comment>
<comment type="alternative products">
    <event type="alternative splicing"/>
    <isoform>
        <id>Q6IN84-1</id>
        <name>1</name>
        <sequence type="displayed"/>
    </isoform>
    <isoform>
        <id>Q6IN84-2</id>
        <name>2</name>
        <sequence type="described" ref="VSP_022494"/>
    </isoform>
</comment>
<comment type="similarity">
    <text evidence="13">Belongs to the class IV-like SAM-binding methyltransferase superfamily. RNA methyltransferase TrmH family.</text>
</comment>
<name>MRM1_HUMAN</name>
<proteinExistence type="evidence at protein level"/>
<evidence type="ECO:0000255" key="1"/>
<evidence type="ECO:0000256" key="2">
    <source>
        <dbReference type="SAM" id="MobiDB-lite"/>
    </source>
</evidence>
<evidence type="ECO:0000269" key="3">
    <source>
    </source>
</evidence>
<evidence type="ECO:0000269" key="4">
    <source>
    </source>
</evidence>
<evidence type="ECO:0000269" key="5">
    <source>
    </source>
</evidence>
<evidence type="ECO:0000269" key="6">
    <source>
    </source>
</evidence>
<evidence type="ECO:0000269" key="7">
    <source>
    </source>
</evidence>
<evidence type="ECO:0000303" key="8">
    <source>
    </source>
</evidence>
<evidence type="ECO:0000303" key="9">
    <source>
    </source>
</evidence>
<evidence type="ECO:0000303" key="10">
    <source>
    </source>
</evidence>
<evidence type="ECO:0000303" key="11">
    <source>
    </source>
</evidence>
<evidence type="ECO:0000303" key="12">
    <source ref="2"/>
</evidence>
<evidence type="ECO:0000305" key="13"/>
<evidence type="ECO:0000305" key="14">
    <source>
    </source>
</evidence>
<evidence type="ECO:0000305" key="15">
    <source>
    </source>
</evidence>
<accession>Q6IN84</accession>
<accession>A8K8E2</accession>
<accession>Q96GK2</accession>
<accession>Q9H664</accession>
<gene>
    <name evidence="10" type="primary">MRM1</name>
</gene>
<protein>
    <recommendedName>
        <fullName evidence="10">rRNA methyltransferase 1, mitochondrial</fullName>
        <ecNumber evidence="14 15">2.1.1.-</ecNumber>
    </recommendedName>
    <alternativeName>
        <fullName evidence="11">16S rRNA (guanosine(1145)-2'-O)-methyltransferase</fullName>
    </alternativeName>
    <alternativeName>
        <fullName evidence="11">16S rRNA [Gm1145] 2'-O-methyltransferase</fullName>
    </alternativeName>
</protein>
<reference key="1">
    <citation type="journal article" date="2004" name="Nat. Genet.">
        <title>Complete sequencing and characterization of 21,243 full-length human cDNAs.</title>
        <authorList>
            <person name="Ota T."/>
            <person name="Suzuki Y."/>
            <person name="Nishikawa T."/>
            <person name="Otsuki T."/>
            <person name="Sugiyama T."/>
            <person name="Irie R."/>
            <person name="Wakamatsu A."/>
            <person name="Hayashi K."/>
            <person name="Sato H."/>
            <person name="Nagai K."/>
            <person name="Kimura K."/>
            <person name="Makita H."/>
            <person name="Sekine M."/>
            <person name="Obayashi M."/>
            <person name="Nishi T."/>
            <person name="Shibahara T."/>
            <person name="Tanaka T."/>
            <person name="Ishii S."/>
            <person name="Yamamoto J."/>
            <person name="Saito K."/>
            <person name="Kawai Y."/>
            <person name="Isono Y."/>
            <person name="Nakamura Y."/>
            <person name="Nagahari K."/>
            <person name="Murakami K."/>
            <person name="Yasuda T."/>
            <person name="Iwayanagi T."/>
            <person name="Wagatsuma M."/>
            <person name="Shiratori A."/>
            <person name="Sudo H."/>
            <person name="Hosoiri T."/>
            <person name="Kaku Y."/>
            <person name="Kodaira H."/>
            <person name="Kondo H."/>
            <person name="Sugawara M."/>
            <person name="Takahashi M."/>
            <person name="Kanda K."/>
            <person name="Yokoi T."/>
            <person name="Furuya T."/>
            <person name="Kikkawa E."/>
            <person name="Omura Y."/>
            <person name="Abe K."/>
            <person name="Kamihara K."/>
            <person name="Katsuta N."/>
            <person name="Sato K."/>
            <person name="Tanikawa M."/>
            <person name="Yamazaki M."/>
            <person name="Ninomiya K."/>
            <person name="Ishibashi T."/>
            <person name="Yamashita H."/>
            <person name="Murakawa K."/>
            <person name="Fujimori K."/>
            <person name="Tanai H."/>
            <person name="Kimata M."/>
            <person name="Watanabe M."/>
            <person name="Hiraoka S."/>
            <person name="Chiba Y."/>
            <person name="Ishida S."/>
            <person name="Ono Y."/>
            <person name="Takiguchi S."/>
            <person name="Watanabe S."/>
            <person name="Yosida M."/>
            <person name="Hotuta T."/>
            <person name="Kusano J."/>
            <person name="Kanehori K."/>
            <person name="Takahashi-Fujii A."/>
            <person name="Hara H."/>
            <person name="Tanase T.-O."/>
            <person name="Nomura Y."/>
            <person name="Togiya S."/>
            <person name="Komai F."/>
            <person name="Hara R."/>
            <person name="Takeuchi K."/>
            <person name="Arita M."/>
            <person name="Imose N."/>
            <person name="Musashino K."/>
            <person name="Yuuki H."/>
            <person name="Oshima A."/>
            <person name="Sasaki N."/>
            <person name="Aotsuka S."/>
            <person name="Yoshikawa Y."/>
            <person name="Matsunawa H."/>
            <person name="Ichihara T."/>
            <person name="Shiohata N."/>
            <person name="Sano S."/>
            <person name="Moriya S."/>
            <person name="Momiyama H."/>
            <person name="Satoh N."/>
            <person name="Takami S."/>
            <person name="Terashima Y."/>
            <person name="Suzuki O."/>
            <person name="Nakagawa S."/>
            <person name="Senoh A."/>
            <person name="Mizoguchi H."/>
            <person name="Goto Y."/>
            <person name="Shimizu F."/>
            <person name="Wakebe H."/>
            <person name="Hishigaki H."/>
            <person name="Watanabe T."/>
            <person name="Sugiyama A."/>
            <person name="Takemoto M."/>
            <person name="Kawakami B."/>
            <person name="Yamazaki M."/>
            <person name="Watanabe K."/>
            <person name="Kumagai A."/>
            <person name="Itakura S."/>
            <person name="Fukuzumi Y."/>
            <person name="Fujimori Y."/>
            <person name="Komiyama M."/>
            <person name="Tashiro H."/>
            <person name="Tanigami A."/>
            <person name="Fujiwara T."/>
            <person name="Ono T."/>
            <person name="Yamada K."/>
            <person name="Fujii Y."/>
            <person name="Ozaki K."/>
            <person name="Hirao M."/>
            <person name="Ohmori Y."/>
            <person name="Kawabata A."/>
            <person name="Hikiji T."/>
            <person name="Kobatake N."/>
            <person name="Inagaki H."/>
            <person name="Ikema Y."/>
            <person name="Okamoto S."/>
            <person name="Okitani R."/>
            <person name="Kawakami T."/>
            <person name="Noguchi S."/>
            <person name="Itoh T."/>
            <person name="Shigeta K."/>
            <person name="Senba T."/>
            <person name="Matsumura K."/>
            <person name="Nakajima Y."/>
            <person name="Mizuno T."/>
            <person name="Morinaga M."/>
            <person name="Sasaki M."/>
            <person name="Togashi T."/>
            <person name="Oyama M."/>
            <person name="Hata H."/>
            <person name="Watanabe M."/>
            <person name="Komatsu T."/>
            <person name="Mizushima-Sugano J."/>
            <person name="Satoh T."/>
            <person name="Shirai Y."/>
            <person name="Takahashi Y."/>
            <person name="Nakagawa K."/>
            <person name="Okumura K."/>
            <person name="Nagase T."/>
            <person name="Nomura N."/>
            <person name="Kikuchi H."/>
            <person name="Masuho Y."/>
            <person name="Yamashita R."/>
            <person name="Nakai K."/>
            <person name="Yada T."/>
            <person name="Nakamura Y."/>
            <person name="Ohara O."/>
            <person name="Isogai T."/>
            <person name="Sugano S."/>
        </authorList>
    </citation>
    <scope>NUCLEOTIDE SEQUENCE [LARGE SCALE MRNA] (ISOFORMS 1 AND 2)</scope>
    <source>
        <tissue>Small intestine</tissue>
        <tissue>Testis</tissue>
    </source>
</reference>
<reference key="2">
    <citation type="submission" date="2004-06" db="EMBL/GenBank/DDBJ databases">
        <title>Cloning of human full open reading frames in Gateway(TM) system entry vector (pDONR201).</title>
        <authorList>
            <person name="Ebert L."/>
            <person name="Schick M."/>
            <person name="Neubert P."/>
            <person name="Schatten R."/>
            <person name="Henze S."/>
            <person name="Korn B."/>
        </authorList>
    </citation>
    <scope>NUCLEOTIDE SEQUENCE [LARGE SCALE MRNA] (ISOFORM 2)</scope>
</reference>
<reference key="3">
    <citation type="submission" date="2005-07" db="EMBL/GenBank/DDBJ databases">
        <authorList>
            <person name="Mural R.J."/>
            <person name="Istrail S."/>
            <person name="Sutton G.G."/>
            <person name="Florea L."/>
            <person name="Halpern A.L."/>
            <person name="Mobarry C.M."/>
            <person name="Lippert R."/>
            <person name="Walenz B."/>
            <person name="Shatkay H."/>
            <person name="Dew I."/>
            <person name="Miller J.R."/>
            <person name="Flanigan M.J."/>
            <person name="Edwards N.J."/>
            <person name="Bolanos R."/>
            <person name="Fasulo D."/>
            <person name="Halldorsson B.V."/>
            <person name="Hannenhalli S."/>
            <person name="Turner R."/>
            <person name="Yooseph S."/>
            <person name="Lu F."/>
            <person name="Nusskern D.R."/>
            <person name="Shue B.C."/>
            <person name="Zheng X.H."/>
            <person name="Zhong F."/>
            <person name="Delcher A.L."/>
            <person name="Huson D.H."/>
            <person name="Kravitz S.A."/>
            <person name="Mouchard L."/>
            <person name="Reinert K."/>
            <person name="Remington K.A."/>
            <person name="Clark A.G."/>
            <person name="Waterman M.S."/>
            <person name="Eichler E.E."/>
            <person name="Adams M.D."/>
            <person name="Hunkapiller M.W."/>
            <person name="Myers E.W."/>
            <person name="Venter J.C."/>
        </authorList>
    </citation>
    <scope>NUCLEOTIDE SEQUENCE [LARGE SCALE GENOMIC DNA]</scope>
</reference>
<reference key="4">
    <citation type="journal article" date="2004" name="Genome Res.">
        <title>The status, quality, and expansion of the NIH full-length cDNA project: the Mammalian Gene Collection (MGC).</title>
        <authorList>
            <consortium name="The MGC Project Team"/>
        </authorList>
    </citation>
    <scope>NUCLEOTIDE SEQUENCE [LARGE SCALE MRNA] (ISOFORMS 1 AND 2)</scope>
    <source>
        <tissue>Kidney</tissue>
        <tissue>Skin</tissue>
    </source>
</reference>
<reference key="5">
    <citation type="journal article" date="2011" name="BMC Syst. Biol.">
        <title>Initial characterization of the human central proteome.</title>
        <authorList>
            <person name="Burkard T.R."/>
            <person name="Planyavsky M."/>
            <person name="Kaupe I."/>
            <person name="Breitwieser F.P."/>
            <person name="Buerckstuemmer T."/>
            <person name="Bennett K.L."/>
            <person name="Superti-Furga G."/>
            <person name="Colinge J."/>
        </authorList>
    </citation>
    <scope>IDENTIFICATION BY MASS SPECTROMETRY [LARGE SCALE ANALYSIS]</scope>
</reference>
<reference key="6">
    <citation type="journal article" date="2013" name="J. Biol. Chem.">
        <title>Mitochondrial ribosomal RNA (rRNA) methyltransferase family members are positioned to modify nascent rRNA in foci near the mitochondrial DNA nucleoid.</title>
        <authorList>
            <person name="Lee K.W."/>
            <person name="Okot-Kotber C."/>
            <person name="LaComb J.F."/>
            <person name="Bogenhagen D.F."/>
        </authorList>
    </citation>
    <scope>SUBCELLULAR LOCATION</scope>
</reference>
<reference key="7">
    <citation type="journal article" date="2014" name="J. Biol. Chem.">
        <title>Assignment of 2'-O-methyltransferases to modification sites on the mammalian mitochondrial large subunit 16S rRNA.</title>
        <authorList>
            <person name="Lee K.W."/>
            <person name="Bogenhagen D.F."/>
        </authorList>
    </citation>
    <scope>FUNCTION</scope>
</reference>
<reference key="8">
    <citation type="journal article" date="2014" name="Mol. Biol. Cell">
        <title>MRM2 and MRM3 are involved in biogenesis of the large subunit of the mitochondrial ribosome.</title>
        <authorList>
            <person name="Rorbach J."/>
            <person name="Boesch P."/>
            <person name="Gammage P.A."/>
            <person name="Nicholls T.J."/>
            <person name="Pearce S.F."/>
            <person name="Patel D."/>
            <person name="Hauser A."/>
            <person name="Perocchi F."/>
            <person name="Minczuk M."/>
        </authorList>
    </citation>
    <scope>SUBCELLULAR LOCATION</scope>
</reference>
<reference key="9">
    <citation type="journal article" date="2015" name="Proteomics">
        <title>N-terminome analysis of the human mitochondrial proteome.</title>
        <authorList>
            <person name="Vaca Jacome A.S."/>
            <person name="Rabilloud T."/>
            <person name="Schaeffer-Reiss C."/>
            <person name="Rompais M."/>
            <person name="Ayoub D."/>
            <person name="Lane L."/>
            <person name="Bairoch A."/>
            <person name="Van Dorsselaer A."/>
            <person name="Carapito C."/>
        </authorList>
    </citation>
    <scope>IDENTIFICATION BY MASS SPECTROMETRY [LARGE SCALE ANALYSIS]</scope>
</reference>
<reference key="10">
    <citation type="journal article" date="2016" name="Cell Rep.">
        <title>APEX Fingerprinting Reveals the Subcellular Localization of Proteins of Interest.</title>
        <authorList>
            <person name="Lee S.Y."/>
            <person name="Kang M.G."/>
            <person name="Park J.S."/>
            <person name="Lee G."/>
            <person name="Ting A.Y."/>
            <person name="Rhee H.W."/>
        </authorList>
    </citation>
    <scope>SUBCELLULAR LOCATION</scope>
</reference>
<reference key="11">
    <citation type="journal article" date="2022" name="Nat. Commun.">
        <title>A late-stage assembly checkpoint of the human mitochondrial ribosome large subunit.</title>
        <authorList>
            <person name="Rebelo-Guiomar P."/>
            <person name="Pellegrino S."/>
            <person name="Dent K.C."/>
            <person name="Sas-Chen A."/>
            <person name="Miller-Fleming L."/>
            <person name="Garone C."/>
            <person name="Van Haute L."/>
            <person name="Rogan J.F."/>
            <person name="Dinan A."/>
            <person name="Firth A.E."/>
            <person name="Andrews B."/>
            <person name="Whitworth A.J."/>
            <person name="Schwartz S."/>
            <person name="Warren A.J."/>
            <person name="Minczuk M."/>
        </authorList>
    </citation>
    <scope>FUNCTION</scope>
    <scope>CATALYTIC ACTIVITY</scope>
</reference>